<gene>
    <name evidence="1" type="primary">rnc</name>
    <name type="ordered locus">CCNA_01630</name>
</gene>
<reference key="1">
    <citation type="journal article" date="2010" name="J. Bacteriol.">
        <title>The genetic basis of laboratory adaptation in Caulobacter crescentus.</title>
        <authorList>
            <person name="Marks M.E."/>
            <person name="Castro-Rojas C.M."/>
            <person name="Teiling C."/>
            <person name="Du L."/>
            <person name="Kapatral V."/>
            <person name="Walunas T.L."/>
            <person name="Crosson S."/>
        </authorList>
    </citation>
    <scope>NUCLEOTIDE SEQUENCE [LARGE SCALE GENOMIC DNA]</scope>
    <source>
        <strain>NA1000 / CB15N</strain>
    </source>
</reference>
<accession>B8H627</accession>
<protein>
    <recommendedName>
        <fullName evidence="1">Ribonuclease 3</fullName>
        <ecNumber evidence="1">3.1.26.3</ecNumber>
    </recommendedName>
    <alternativeName>
        <fullName evidence="1">Ribonuclease III</fullName>
        <shortName evidence="1">RNase III</shortName>
    </alternativeName>
</protein>
<organism>
    <name type="scientific">Caulobacter vibrioides (strain NA1000 / CB15N)</name>
    <name type="common">Caulobacter crescentus</name>
    <dbReference type="NCBI Taxonomy" id="565050"/>
    <lineage>
        <taxon>Bacteria</taxon>
        <taxon>Pseudomonadati</taxon>
        <taxon>Pseudomonadota</taxon>
        <taxon>Alphaproteobacteria</taxon>
        <taxon>Caulobacterales</taxon>
        <taxon>Caulobacteraceae</taxon>
        <taxon>Caulobacter</taxon>
    </lineage>
</organism>
<comment type="function">
    <text evidence="1">Digests double-stranded RNA. Involved in the processing of primary rRNA transcript to yield the immediate precursors to the large and small rRNAs (23S and 16S). Processes some mRNAs, and tRNAs when they are encoded in the rRNA operon. Processes pre-crRNA and tracrRNA of type II CRISPR loci if present in the organism.</text>
</comment>
<comment type="catalytic activity">
    <reaction evidence="1">
        <text>Endonucleolytic cleavage to 5'-phosphomonoester.</text>
        <dbReference type="EC" id="3.1.26.3"/>
    </reaction>
</comment>
<comment type="cofactor">
    <cofactor evidence="1">
        <name>Mg(2+)</name>
        <dbReference type="ChEBI" id="CHEBI:18420"/>
    </cofactor>
</comment>
<comment type="subunit">
    <text evidence="1">Homodimer.</text>
</comment>
<comment type="subcellular location">
    <subcellularLocation>
        <location evidence="1">Cytoplasm</location>
    </subcellularLocation>
</comment>
<comment type="similarity">
    <text evidence="1">Belongs to the ribonuclease III family.</text>
</comment>
<evidence type="ECO:0000255" key="1">
    <source>
        <dbReference type="HAMAP-Rule" id="MF_00104"/>
    </source>
</evidence>
<evidence type="ECO:0000256" key="2">
    <source>
        <dbReference type="SAM" id="MobiDB-lite"/>
    </source>
</evidence>
<feature type="chain" id="PRO_1000194416" description="Ribonuclease 3">
    <location>
        <begin position="1"/>
        <end position="231"/>
    </location>
</feature>
<feature type="domain" description="RNase III" evidence="1">
    <location>
        <begin position="8"/>
        <end position="135"/>
    </location>
</feature>
<feature type="domain" description="DRBM" evidence="1">
    <location>
        <begin position="161"/>
        <end position="230"/>
    </location>
</feature>
<feature type="region of interest" description="Disordered" evidence="2">
    <location>
        <begin position="210"/>
        <end position="231"/>
    </location>
</feature>
<feature type="compositionally biased region" description="Basic and acidic residues" evidence="2">
    <location>
        <begin position="212"/>
        <end position="231"/>
    </location>
</feature>
<feature type="active site" evidence="1">
    <location>
        <position position="52"/>
    </location>
</feature>
<feature type="active site" evidence="1">
    <location>
        <position position="124"/>
    </location>
</feature>
<feature type="binding site" evidence="1">
    <location>
        <position position="48"/>
    </location>
    <ligand>
        <name>Mg(2+)</name>
        <dbReference type="ChEBI" id="CHEBI:18420"/>
    </ligand>
</feature>
<feature type="binding site" evidence="1">
    <location>
        <position position="124"/>
    </location>
    <ligand>
        <name>Mg(2+)</name>
        <dbReference type="ChEBI" id="CHEBI:18420"/>
    </ligand>
</feature>
<dbReference type="EC" id="3.1.26.3" evidence="1"/>
<dbReference type="EMBL" id="CP001340">
    <property type="protein sequence ID" value="ACL95095.1"/>
    <property type="molecule type" value="Genomic_DNA"/>
</dbReference>
<dbReference type="RefSeq" id="WP_010919434.1">
    <property type="nucleotide sequence ID" value="NC_011916.1"/>
</dbReference>
<dbReference type="RefSeq" id="YP_002517003.1">
    <property type="nucleotide sequence ID" value="NC_011916.1"/>
</dbReference>
<dbReference type="SMR" id="B8H627"/>
<dbReference type="GeneID" id="7331608"/>
<dbReference type="KEGG" id="ccs:CCNA_01630"/>
<dbReference type="PATRIC" id="fig|565050.3.peg.1608"/>
<dbReference type="HOGENOM" id="CLU_000907_1_1_5"/>
<dbReference type="OrthoDB" id="9805026at2"/>
<dbReference type="PhylomeDB" id="B8H627"/>
<dbReference type="Proteomes" id="UP000001364">
    <property type="component" value="Chromosome"/>
</dbReference>
<dbReference type="GO" id="GO:0005737">
    <property type="term" value="C:cytoplasm"/>
    <property type="evidence" value="ECO:0007669"/>
    <property type="project" value="UniProtKB-SubCell"/>
</dbReference>
<dbReference type="GO" id="GO:0003725">
    <property type="term" value="F:double-stranded RNA binding"/>
    <property type="evidence" value="ECO:0007669"/>
    <property type="project" value="TreeGrafter"/>
</dbReference>
<dbReference type="GO" id="GO:0046872">
    <property type="term" value="F:metal ion binding"/>
    <property type="evidence" value="ECO:0007669"/>
    <property type="project" value="UniProtKB-KW"/>
</dbReference>
<dbReference type="GO" id="GO:0004525">
    <property type="term" value="F:ribonuclease III activity"/>
    <property type="evidence" value="ECO:0007669"/>
    <property type="project" value="UniProtKB-UniRule"/>
</dbReference>
<dbReference type="GO" id="GO:0019843">
    <property type="term" value="F:rRNA binding"/>
    <property type="evidence" value="ECO:0007669"/>
    <property type="project" value="UniProtKB-KW"/>
</dbReference>
<dbReference type="GO" id="GO:0006397">
    <property type="term" value="P:mRNA processing"/>
    <property type="evidence" value="ECO:0007669"/>
    <property type="project" value="UniProtKB-UniRule"/>
</dbReference>
<dbReference type="GO" id="GO:0010468">
    <property type="term" value="P:regulation of gene expression"/>
    <property type="evidence" value="ECO:0007669"/>
    <property type="project" value="TreeGrafter"/>
</dbReference>
<dbReference type="GO" id="GO:0006364">
    <property type="term" value="P:rRNA processing"/>
    <property type="evidence" value="ECO:0007669"/>
    <property type="project" value="UniProtKB-UniRule"/>
</dbReference>
<dbReference type="GO" id="GO:0008033">
    <property type="term" value="P:tRNA processing"/>
    <property type="evidence" value="ECO:0007669"/>
    <property type="project" value="UniProtKB-KW"/>
</dbReference>
<dbReference type="CDD" id="cd10845">
    <property type="entry name" value="DSRM_RNAse_III_family"/>
    <property type="match status" value="1"/>
</dbReference>
<dbReference type="CDD" id="cd00593">
    <property type="entry name" value="RIBOc"/>
    <property type="match status" value="1"/>
</dbReference>
<dbReference type="FunFam" id="1.10.1520.10:FF:000001">
    <property type="entry name" value="Ribonuclease 3"/>
    <property type="match status" value="1"/>
</dbReference>
<dbReference type="FunFam" id="3.30.160.20:FF:000003">
    <property type="entry name" value="Ribonuclease 3"/>
    <property type="match status" value="1"/>
</dbReference>
<dbReference type="Gene3D" id="3.30.160.20">
    <property type="match status" value="1"/>
</dbReference>
<dbReference type="Gene3D" id="1.10.1520.10">
    <property type="entry name" value="Ribonuclease III domain"/>
    <property type="match status" value="1"/>
</dbReference>
<dbReference type="HAMAP" id="MF_00104">
    <property type="entry name" value="RNase_III"/>
    <property type="match status" value="1"/>
</dbReference>
<dbReference type="InterPro" id="IPR014720">
    <property type="entry name" value="dsRBD_dom"/>
</dbReference>
<dbReference type="InterPro" id="IPR011907">
    <property type="entry name" value="RNase_III"/>
</dbReference>
<dbReference type="InterPro" id="IPR000999">
    <property type="entry name" value="RNase_III_dom"/>
</dbReference>
<dbReference type="InterPro" id="IPR036389">
    <property type="entry name" value="RNase_III_sf"/>
</dbReference>
<dbReference type="NCBIfam" id="TIGR02191">
    <property type="entry name" value="RNaseIII"/>
    <property type="match status" value="1"/>
</dbReference>
<dbReference type="PANTHER" id="PTHR11207:SF0">
    <property type="entry name" value="RIBONUCLEASE 3"/>
    <property type="match status" value="1"/>
</dbReference>
<dbReference type="PANTHER" id="PTHR11207">
    <property type="entry name" value="RIBONUCLEASE III"/>
    <property type="match status" value="1"/>
</dbReference>
<dbReference type="Pfam" id="PF00035">
    <property type="entry name" value="dsrm"/>
    <property type="match status" value="1"/>
</dbReference>
<dbReference type="Pfam" id="PF14622">
    <property type="entry name" value="Ribonucleas_3_3"/>
    <property type="match status" value="1"/>
</dbReference>
<dbReference type="SMART" id="SM00358">
    <property type="entry name" value="DSRM"/>
    <property type="match status" value="1"/>
</dbReference>
<dbReference type="SMART" id="SM00535">
    <property type="entry name" value="RIBOc"/>
    <property type="match status" value="1"/>
</dbReference>
<dbReference type="SUPFAM" id="SSF54768">
    <property type="entry name" value="dsRNA-binding domain-like"/>
    <property type="match status" value="1"/>
</dbReference>
<dbReference type="SUPFAM" id="SSF69065">
    <property type="entry name" value="RNase III domain-like"/>
    <property type="match status" value="1"/>
</dbReference>
<dbReference type="PROSITE" id="PS50137">
    <property type="entry name" value="DS_RBD"/>
    <property type="match status" value="1"/>
</dbReference>
<dbReference type="PROSITE" id="PS50142">
    <property type="entry name" value="RNASE_3_2"/>
    <property type="match status" value="1"/>
</dbReference>
<keyword id="KW-0963">Cytoplasm</keyword>
<keyword id="KW-0255">Endonuclease</keyword>
<keyword id="KW-0378">Hydrolase</keyword>
<keyword id="KW-0460">Magnesium</keyword>
<keyword id="KW-0479">Metal-binding</keyword>
<keyword id="KW-0507">mRNA processing</keyword>
<keyword id="KW-0540">Nuclease</keyword>
<keyword id="KW-1185">Reference proteome</keyword>
<keyword id="KW-0694">RNA-binding</keyword>
<keyword id="KW-0698">rRNA processing</keyword>
<keyword id="KW-0699">rRNA-binding</keyword>
<keyword id="KW-0819">tRNA processing</keyword>
<proteinExistence type="inferred from homology"/>
<name>RNC_CAUVN</name>
<sequence length="231" mass="24971">MDRRVAAVGDLERRIGHRFEDRELLERALTHASVGDGAKKVRDNEVLEFIGDRVLGLLAAEALAQRFPKAKEGELAPRLNALVSRETCARVARKAELGPALRLSASSSKIGGRETDSILAGATEALMAALYQDGGLEAARKVFLDLWNDEFDRAGEGRPRDPKTALQEWAQGQGRPLPTYRVLDRTGPDHAPVFTVEVSVTGVDPAIAKGKSRQEAEKAAAKALLEREGAG</sequence>